<organism>
    <name type="scientific">Methylobacillus flagellatus (strain ATCC 51484 / DSM 6875 / VKM B-1610 / KT)</name>
    <dbReference type="NCBI Taxonomy" id="265072"/>
    <lineage>
        <taxon>Bacteria</taxon>
        <taxon>Pseudomonadati</taxon>
        <taxon>Pseudomonadota</taxon>
        <taxon>Betaproteobacteria</taxon>
        <taxon>Nitrosomonadales</taxon>
        <taxon>Methylophilaceae</taxon>
        <taxon>Methylobacillus</taxon>
    </lineage>
</organism>
<keyword id="KW-0030">Aminoacyl-tRNA synthetase</keyword>
<keyword id="KW-0067">ATP-binding</keyword>
<keyword id="KW-0963">Cytoplasm</keyword>
<keyword id="KW-0436">Ligase</keyword>
<keyword id="KW-0547">Nucleotide-binding</keyword>
<keyword id="KW-0648">Protein biosynthesis</keyword>
<keyword id="KW-1185">Reference proteome</keyword>
<protein>
    <recommendedName>
        <fullName evidence="1">Glutamate--tRNA ligase</fullName>
        <ecNumber evidence="1">6.1.1.17</ecNumber>
    </recommendedName>
    <alternativeName>
        <fullName evidence="1">Glutamyl-tRNA synthetase</fullName>
        <shortName evidence="1">GluRS</shortName>
    </alternativeName>
</protein>
<feature type="chain" id="PRO_1000071000" description="Glutamate--tRNA ligase">
    <location>
        <begin position="1"/>
        <end position="467"/>
    </location>
</feature>
<feature type="short sequence motif" description="'HIGH' region" evidence="1">
    <location>
        <begin position="9"/>
        <end position="19"/>
    </location>
</feature>
<feature type="short sequence motif" description="'KMSKS' region" evidence="1">
    <location>
        <begin position="241"/>
        <end position="245"/>
    </location>
</feature>
<feature type="binding site" evidence="1">
    <location>
        <position position="244"/>
    </location>
    <ligand>
        <name>ATP</name>
        <dbReference type="ChEBI" id="CHEBI:30616"/>
    </ligand>
</feature>
<evidence type="ECO:0000255" key="1">
    <source>
        <dbReference type="HAMAP-Rule" id="MF_00022"/>
    </source>
</evidence>
<accession>Q1H0X9</accession>
<name>SYE_METFK</name>
<comment type="function">
    <text evidence="1">Catalyzes the attachment of glutamate to tRNA(Glu) in a two-step reaction: glutamate is first activated by ATP to form Glu-AMP and then transferred to the acceptor end of tRNA(Glu).</text>
</comment>
<comment type="catalytic activity">
    <reaction evidence="1">
        <text>tRNA(Glu) + L-glutamate + ATP = L-glutamyl-tRNA(Glu) + AMP + diphosphate</text>
        <dbReference type="Rhea" id="RHEA:23540"/>
        <dbReference type="Rhea" id="RHEA-COMP:9663"/>
        <dbReference type="Rhea" id="RHEA-COMP:9680"/>
        <dbReference type="ChEBI" id="CHEBI:29985"/>
        <dbReference type="ChEBI" id="CHEBI:30616"/>
        <dbReference type="ChEBI" id="CHEBI:33019"/>
        <dbReference type="ChEBI" id="CHEBI:78442"/>
        <dbReference type="ChEBI" id="CHEBI:78520"/>
        <dbReference type="ChEBI" id="CHEBI:456215"/>
        <dbReference type="EC" id="6.1.1.17"/>
    </reaction>
</comment>
<comment type="subunit">
    <text evidence="1">Monomer.</text>
</comment>
<comment type="subcellular location">
    <subcellularLocation>
        <location evidence="1">Cytoplasm</location>
    </subcellularLocation>
</comment>
<comment type="similarity">
    <text evidence="1">Belongs to the class-I aminoacyl-tRNA synthetase family. Glutamate--tRNA ligase type 1 subfamily.</text>
</comment>
<sequence>MTVRTRFAPSPTGFLHIGGARTALFSWAYARKHAGSFILRIEDTDVARSTPEAVQAILDGMRWLGLDWDEGPFYQMQRMDRYKVVIGKLLDEGHAYHCYCSREELDALREQQMREGKKPRYDGRWRPESGKVLPAIPADIPPVVRFKNPRAGNVVWNDLVKGEISIANEELDDLIIARADGTPTYNFCVVVDDWDMGITHVIRGDDHVNNTPRQINLLQALGATIPQYAHLSMILGDDGQKLSKRHGAVSVMQYHEDGYLPEAVLNYLARLGWSHGDDEIFTMSQFCEWFGFDHITPSAAQFNTEKLNWLNAHYIKQAELGRLAVDIAKRLADAGIQVSDRVDLQGVIALYRDRASTLNQIAGSIAYFYRRPNIEASLLEKYLTPEILPVLTALLEELKDIEWTREKLHEVIQGAVTQNALKFPKVAMPLRVMLTGSDQSPSIDAVMVLLGQEESLARMRSVLQVNV</sequence>
<reference key="1">
    <citation type="submission" date="2006-03" db="EMBL/GenBank/DDBJ databases">
        <title>Complete sequence of Methylobacillus flagellatus KT.</title>
        <authorList>
            <consortium name="US DOE Joint Genome Institute"/>
            <person name="Copeland A."/>
            <person name="Lucas S."/>
            <person name="Lapidus A."/>
            <person name="Barry K."/>
            <person name="Detter J.C."/>
            <person name="Glavina del Rio T."/>
            <person name="Hammon N."/>
            <person name="Israni S."/>
            <person name="Dalin E."/>
            <person name="Tice H."/>
            <person name="Pitluck S."/>
            <person name="Brettin T."/>
            <person name="Bruce D."/>
            <person name="Han C."/>
            <person name="Tapia R."/>
            <person name="Saunders E."/>
            <person name="Gilna P."/>
            <person name="Schmutz J."/>
            <person name="Larimer F."/>
            <person name="Land M."/>
            <person name="Kyrpides N."/>
            <person name="Anderson I."/>
            <person name="Richardson P."/>
        </authorList>
    </citation>
    <scope>NUCLEOTIDE SEQUENCE [LARGE SCALE GENOMIC DNA]</scope>
    <source>
        <strain>ATCC 51484 / DSM 6875 / VKM B-1610 / KT</strain>
    </source>
</reference>
<dbReference type="EC" id="6.1.1.17" evidence="1"/>
<dbReference type="EMBL" id="CP000284">
    <property type="protein sequence ID" value="ABE49858.1"/>
    <property type="molecule type" value="Genomic_DNA"/>
</dbReference>
<dbReference type="RefSeq" id="WP_011479812.1">
    <property type="nucleotide sequence ID" value="NC_007947.1"/>
</dbReference>
<dbReference type="SMR" id="Q1H0X9"/>
<dbReference type="STRING" id="265072.Mfla_1590"/>
<dbReference type="KEGG" id="mfa:Mfla_1590"/>
<dbReference type="eggNOG" id="COG0008">
    <property type="taxonomic scope" value="Bacteria"/>
</dbReference>
<dbReference type="HOGENOM" id="CLU_015768_6_3_4"/>
<dbReference type="OrthoDB" id="9807503at2"/>
<dbReference type="Proteomes" id="UP000002440">
    <property type="component" value="Chromosome"/>
</dbReference>
<dbReference type="GO" id="GO:0005829">
    <property type="term" value="C:cytosol"/>
    <property type="evidence" value="ECO:0007669"/>
    <property type="project" value="TreeGrafter"/>
</dbReference>
<dbReference type="GO" id="GO:0005524">
    <property type="term" value="F:ATP binding"/>
    <property type="evidence" value="ECO:0007669"/>
    <property type="project" value="UniProtKB-UniRule"/>
</dbReference>
<dbReference type="GO" id="GO:0004818">
    <property type="term" value="F:glutamate-tRNA ligase activity"/>
    <property type="evidence" value="ECO:0007669"/>
    <property type="project" value="UniProtKB-UniRule"/>
</dbReference>
<dbReference type="GO" id="GO:0000049">
    <property type="term" value="F:tRNA binding"/>
    <property type="evidence" value="ECO:0007669"/>
    <property type="project" value="InterPro"/>
</dbReference>
<dbReference type="GO" id="GO:0008270">
    <property type="term" value="F:zinc ion binding"/>
    <property type="evidence" value="ECO:0007669"/>
    <property type="project" value="InterPro"/>
</dbReference>
<dbReference type="GO" id="GO:0006424">
    <property type="term" value="P:glutamyl-tRNA aminoacylation"/>
    <property type="evidence" value="ECO:0007669"/>
    <property type="project" value="UniProtKB-UniRule"/>
</dbReference>
<dbReference type="CDD" id="cd00808">
    <property type="entry name" value="GluRS_core"/>
    <property type="match status" value="1"/>
</dbReference>
<dbReference type="FunFam" id="3.40.50.620:FF:000007">
    <property type="entry name" value="Glutamate--tRNA ligase"/>
    <property type="match status" value="1"/>
</dbReference>
<dbReference type="Gene3D" id="1.10.10.350">
    <property type="match status" value="1"/>
</dbReference>
<dbReference type="Gene3D" id="3.40.50.620">
    <property type="entry name" value="HUPs"/>
    <property type="match status" value="1"/>
</dbReference>
<dbReference type="HAMAP" id="MF_00022">
    <property type="entry name" value="Glu_tRNA_synth_type1"/>
    <property type="match status" value="1"/>
</dbReference>
<dbReference type="InterPro" id="IPR045462">
    <property type="entry name" value="aa-tRNA-synth_I_cd-bd"/>
</dbReference>
<dbReference type="InterPro" id="IPR020751">
    <property type="entry name" value="aa-tRNA-synth_I_codon-bd_sub2"/>
</dbReference>
<dbReference type="InterPro" id="IPR001412">
    <property type="entry name" value="aa-tRNA-synth_I_CS"/>
</dbReference>
<dbReference type="InterPro" id="IPR008925">
    <property type="entry name" value="aa_tRNA-synth_I_cd-bd_sf"/>
</dbReference>
<dbReference type="InterPro" id="IPR004527">
    <property type="entry name" value="Glu-tRNA-ligase_bac/mito"/>
</dbReference>
<dbReference type="InterPro" id="IPR000924">
    <property type="entry name" value="Glu/Gln-tRNA-synth"/>
</dbReference>
<dbReference type="InterPro" id="IPR020058">
    <property type="entry name" value="Glu/Gln-tRNA-synth_Ib_cat-dom"/>
</dbReference>
<dbReference type="InterPro" id="IPR049940">
    <property type="entry name" value="GluQ/Sye"/>
</dbReference>
<dbReference type="InterPro" id="IPR033910">
    <property type="entry name" value="GluRS_core"/>
</dbReference>
<dbReference type="InterPro" id="IPR014729">
    <property type="entry name" value="Rossmann-like_a/b/a_fold"/>
</dbReference>
<dbReference type="NCBIfam" id="TIGR00464">
    <property type="entry name" value="gltX_bact"/>
    <property type="match status" value="1"/>
</dbReference>
<dbReference type="PANTHER" id="PTHR43311">
    <property type="entry name" value="GLUTAMATE--TRNA LIGASE"/>
    <property type="match status" value="1"/>
</dbReference>
<dbReference type="PANTHER" id="PTHR43311:SF2">
    <property type="entry name" value="GLUTAMATE--TRNA LIGASE, MITOCHONDRIAL-RELATED"/>
    <property type="match status" value="1"/>
</dbReference>
<dbReference type="Pfam" id="PF19269">
    <property type="entry name" value="Anticodon_2"/>
    <property type="match status" value="1"/>
</dbReference>
<dbReference type="Pfam" id="PF00749">
    <property type="entry name" value="tRNA-synt_1c"/>
    <property type="match status" value="1"/>
</dbReference>
<dbReference type="PRINTS" id="PR00987">
    <property type="entry name" value="TRNASYNTHGLU"/>
</dbReference>
<dbReference type="SUPFAM" id="SSF48163">
    <property type="entry name" value="An anticodon-binding domain of class I aminoacyl-tRNA synthetases"/>
    <property type="match status" value="1"/>
</dbReference>
<dbReference type="SUPFAM" id="SSF52374">
    <property type="entry name" value="Nucleotidylyl transferase"/>
    <property type="match status" value="1"/>
</dbReference>
<dbReference type="PROSITE" id="PS00178">
    <property type="entry name" value="AA_TRNA_LIGASE_I"/>
    <property type="match status" value="1"/>
</dbReference>
<gene>
    <name evidence="1" type="primary">gltX</name>
    <name type="ordered locus">Mfla_1590</name>
</gene>
<proteinExistence type="inferred from homology"/>